<organism>
    <name type="scientific">Rhodopseudomonas palustris (strain BisB18)</name>
    <dbReference type="NCBI Taxonomy" id="316056"/>
    <lineage>
        <taxon>Bacteria</taxon>
        <taxon>Pseudomonadati</taxon>
        <taxon>Pseudomonadota</taxon>
        <taxon>Alphaproteobacteria</taxon>
        <taxon>Hyphomicrobiales</taxon>
        <taxon>Nitrobacteraceae</taxon>
        <taxon>Rhodopseudomonas</taxon>
    </lineage>
</organism>
<protein>
    <recommendedName>
        <fullName evidence="1">Ribose-5-phosphate isomerase A</fullName>
        <ecNumber evidence="1">5.3.1.6</ecNumber>
    </recommendedName>
    <alternativeName>
        <fullName evidence="1">Phosphoriboisomerase A</fullName>
        <shortName evidence="1">PRI</shortName>
    </alternativeName>
</protein>
<comment type="function">
    <text evidence="1">Catalyzes the reversible conversion of ribose-5-phosphate to ribulose 5-phosphate.</text>
</comment>
<comment type="catalytic activity">
    <reaction evidence="1">
        <text>aldehydo-D-ribose 5-phosphate = D-ribulose 5-phosphate</text>
        <dbReference type="Rhea" id="RHEA:14657"/>
        <dbReference type="ChEBI" id="CHEBI:58121"/>
        <dbReference type="ChEBI" id="CHEBI:58273"/>
        <dbReference type="EC" id="5.3.1.6"/>
    </reaction>
</comment>
<comment type="pathway">
    <text evidence="1">Carbohydrate degradation; pentose phosphate pathway; D-ribose 5-phosphate from D-ribulose 5-phosphate (non-oxidative stage): step 1/1.</text>
</comment>
<comment type="subunit">
    <text evidence="1">Homodimer.</text>
</comment>
<comment type="similarity">
    <text evidence="1">Belongs to the ribose 5-phosphate isomerase family.</text>
</comment>
<accession>Q216Q6</accession>
<evidence type="ECO:0000255" key="1">
    <source>
        <dbReference type="HAMAP-Rule" id="MF_00170"/>
    </source>
</evidence>
<feature type="chain" id="PRO_1000016977" description="Ribose-5-phosphate isomerase A">
    <location>
        <begin position="1"/>
        <end position="232"/>
    </location>
</feature>
<feature type="active site" description="Proton acceptor" evidence="1">
    <location>
        <position position="105"/>
    </location>
</feature>
<feature type="binding site" evidence="1">
    <location>
        <begin position="28"/>
        <end position="31"/>
    </location>
    <ligand>
        <name>substrate</name>
    </ligand>
</feature>
<feature type="binding site" evidence="1">
    <location>
        <begin position="83"/>
        <end position="86"/>
    </location>
    <ligand>
        <name>substrate</name>
    </ligand>
</feature>
<feature type="binding site" evidence="1">
    <location>
        <begin position="96"/>
        <end position="99"/>
    </location>
    <ligand>
        <name>substrate</name>
    </ligand>
</feature>
<feature type="binding site" evidence="1">
    <location>
        <position position="123"/>
    </location>
    <ligand>
        <name>substrate</name>
    </ligand>
</feature>
<reference key="1">
    <citation type="submission" date="2006-03" db="EMBL/GenBank/DDBJ databases">
        <title>Complete sequence of Rhodopseudomonas palustris BisB18.</title>
        <authorList>
            <consortium name="US DOE Joint Genome Institute"/>
            <person name="Copeland A."/>
            <person name="Lucas S."/>
            <person name="Lapidus A."/>
            <person name="Barry K."/>
            <person name="Detter J.C."/>
            <person name="Glavina del Rio T."/>
            <person name="Hammon N."/>
            <person name="Israni S."/>
            <person name="Dalin E."/>
            <person name="Tice H."/>
            <person name="Pitluck S."/>
            <person name="Chain P."/>
            <person name="Malfatti S."/>
            <person name="Shin M."/>
            <person name="Vergez L."/>
            <person name="Schmutz J."/>
            <person name="Larimer F."/>
            <person name="Land M."/>
            <person name="Hauser L."/>
            <person name="Pelletier D.A."/>
            <person name="Kyrpides N."/>
            <person name="Anderson I."/>
            <person name="Oda Y."/>
            <person name="Harwood C.S."/>
            <person name="Richardson P."/>
        </authorList>
    </citation>
    <scope>NUCLEOTIDE SEQUENCE [LARGE SCALE GENOMIC DNA]</scope>
    <source>
        <strain>BisB18</strain>
    </source>
</reference>
<sequence>MSSDELKRQAAAAALEHVRDGMKLGLGTGSTAKHFVELLGERVRGGLNVVGVPTSEVTRADALRCGIALTTLDEVDRLDLTVDGADEINAALNLIKGGGGALLREKIVAAASDRMIVIADESKLVANLGRFPLPIEVNSFGLAATLRAIEEACAECGVFGPLSLRKGSDGHAFVTDGGHWIVDAQLGRIPDAPSLADQLNAIPGVVENGLFIGLASMAVLAGPNGIRIIERP</sequence>
<dbReference type="EC" id="5.3.1.6" evidence="1"/>
<dbReference type="EMBL" id="CP000301">
    <property type="protein sequence ID" value="ABD87630.1"/>
    <property type="molecule type" value="Genomic_DNA"/>
</dbReference>
<dbReference type="SMR" id="Q216Q6"/>
<dbReference type="STRING" id="316056.RPC_2076"/>
<dbReference type="KEGG" id="rpc:RPC_2076"/>
<dbReference type="eggNOG" id="COG0120">
    <property type="taxonomic scope" value="Bacteria"/>
</dbReference>
<dbReference type="HOGENOM" id="CLU_056590_1_0_5"/>
<dbReference type="OrthoDB" id="5870696at2"/>
<dbReference type="UniPathway" id="UPA00115">
    <property type="reaction ID" value="UER00412"/>
</dbReference>
<dbReference type="GO" id="GO:0004751">
    <property type="term" value="F:ribose-5-phosphate isomerase activity"/>
    <property type="evidence" value="ECO:0007669"/>
    <property type="project" value="UniProtKB-UniRule"/>
</dbReference>
<dbReference type="GO" id="GO:0009052">
    <property type="term" value="P:pentose-phosphate shunt, non-oxidative branch"/>
    <property type="evidence" value="ECO:0007669"/>
    <property type="project" value="UniProtKB-UniRule"/>
</dbReference>
<dbReference type="CDD" id="cd01398">
    <property type="entry name" value="RPI_A"/>
    <property type="match status" value="1"/>
</dbReference>
<dbReference type="FunFam" id="3.40.50.1360:FF:000001">
    <property type="entry name" value="Ribose-5-phosphate isomerase A"/>
    <property type="match status" value="1"/>
</dbReference>
<dbReference type="Gene3D" id="3.30.70.260">
    <property type="match status" value="1"/>
</dbReference>
<dbReference type="Gene3D" id="3.40.50.1360">
    <property type="match status" value="1"/>
</dbReference>
<dbReference type="HAMAP" id="MF_00170">
    <property type="entry name" value="Rib_5P_isom_A"/>
    <property type="match status" value="1"/>
</dbReference>
<dbReference type="InterPro" id="IPR037171">
    <property type="entry name" value="NagB/RpiA_transferase-like"/>
</dbReference>
<dbReference type="InterPro" id="IPR050262">
    <property type="entry name" value="Ribose-5P_isomerase"/>
</dbReference>
<dbReference type="InterPro" id="IPR020672">
    <property type="entry name" value="Ribose5P_isomerase_typA_subgr"/>
</dbReference>
<dbReference type="InterPro" id="IPR004788">
    <property type="entry name" value="Ribose5P_isomerase_type_A"/>
</dbReference>
<dbReference type="NCBIfam" id="NF001924">
    <property type="entry name" value="PRK00702.1"/>
    <property type="match status" value="1"/>
</dbReference>
<dbReference type="NCBIfam" id="TIGR00021">
    <property type="entry name" value="rpiA"/>
    <property type="match status" value="1"/>
</dbReference>
<dbReference type="PANTHER" id="PTHR43748">
    <property type="entry name" value="RIBOSE-5-PHOSPHATE ISOMERASE 3, CHLOROPLASTIC-RELATED"/>
    <property type="match status" value="1"/>
</dbReference>
<dbReference type="PANTHER" id="PTHR43748:SF3">
    <property type="entry name" value="RIBOSE-5-PHOSPHATE ISOMERASE 3, CHLOROPLASTIC-RELATED"/>
    <property type="match status" value="1"/>
</dbReference>
<dbReference type="Pfam" id="PF06026">
    <property type="entry name" value="Rib_5-P_isom_A"/>
    <property type="match status" value="1"/>
</dbReference>
<dbReference type="SUPFAM" id="SSF75445">
    <property type="entry name" value="D-ribose-5-phosphate isomerase (RpiA), lid domain"/>
    <property type="match status" value="1"/>
</dbReference>
<dbReference type="SUPFAM" id="SSF100950">
    <property type="entry name" value="NagB/RpiA/CoA transferase-like"/>
    <property type="match status" value="1"/>
</dbReference>
<name>RPIA_RHOPB</name>
<gene>
    <name evidence="1" type="primary">rpiA</name>
    <name type="ordered locus">RPC_2076</name>
</gene>
<proteinExistence type="inferred from homology"/>
<keyword id="KW-0413">Isomerase</keyword>